<proteinExistence type="inferred from homology"/>
<protein>
    <recommendedName>
        <fullName evidence="1">Glutamate racemase</fullName>
        <ecNumber evidence="1">5.1.1.3</ecNumber>
    </recommendedName>
</protein>
<evidence type="ECO:0000255" key="1">
    <source>
        <dbReference type="HAMAP-Rule" id="MF_00258"/>
    </source>
</evidence>
<comment type="function">
    <text evidence="1">Provides the (R)-glutamate required for cell wall biosynthesis.</text>
</comment>
<comment type="catalytic activity">
    <reaction evidence="1">
        <text>L-glutamate = D-glutamate</text>
        <dbReference type="Rhea" id="RHEA:12813"/>
        <dbReference type="ChEBI" id="CHEBI:29985"/>
        <dbReference type="ChEBI" id="CHEBI:29986"/>
        <dbReference type="EC" id="5.1.1.3"/>
    </reaction>
</comment>
<comment type="pathway">
    <text evidence="1">Cell wall biogenesis; peptidoglycan biosynthesis.</text>
</comment>
<comment type="similarity">
    <text evidence="1">Belongs to the aspartate/glutamate racemases family.</text>
</comment>
<reference key="1">
    <citation type="submission" date="2006-08" db="EMBL/GenBank/DDBJ databases">
        <title>Complete sequence of chromosome 1 of Shewanella sp. MR-7.</title>
        <authorList>
            <person name="Copeland A."/>
            <person name="Lucas S."/>
            <person name="Lapidus A."/>
            <person name="Barry K."/>
            <person name="Detter J.C."/>
            <person name="Glavina del Rio T."/>
            <person name="Hammon N."/>
            <person name="Israni S."/>
            <person name="Dalin E."/>
            <person name="Tice H."/>
            <person name="Pitluck S."/>
            <person name="Kiss H."/>
            <person name="Brettin T."/>
            <person name="Bruce D."/>
            <person name="Han C."/>
            <person name="Tapia R."/>
            <person name="Gilna P."/>
            <person name="Schmutz J."/>
            <person name="Larimer F."/>
            <person name="Land M."/>
            <person name="Hauser L."/>
            <person name="Kyrpides N."/>
            <person name="Mikhailova N."/>
            <person name="Nealson K."/>
            <person name="Konstantinidis K."/>
            <person name="Klappenbach J."/>
            <person name="Tiedje J."/>
            <person name="Richardson P."/>
        </authorList>
    </citation>
    <scope>NUCLEOTIDE SEQUENCE [LARGE SCALE GENOMIC DNA]</scope>
    <source>
        <strain>MR-7</strain>
    </source>
</reference>
<feature type="chain" id="PRO_1000047610" description="Glutamate racemase">
    <location>
        <begin position="1"/>
        <end position="272"/>
    </location>
</feature>
<feature type="active site" description="Proton donor/acceptor" evidence="1">
    <location>
        <position position="73"/>
    </location>
</feature>
<feature type="active site" description="Proton donor/acceptor" evidence="1">
    <location>
        <position position="183"/>
    </location>
</feature>
<feature type="binding site" evidence="1">
    <location>
        <begin position="9"/>
        <end position="10"/>
    </location>
    <ligand>
        <name>substrate</name>
    </ligand>
</feature>
<feature type="binding site" evidence="1">
    <location>
        <begin position="41"/>
        <end position="42"/>
    </location>
    <ligand>
        <name>substrate</name>
    </ligand>
</feature>
<feature type="binding site" evidence="1">
    <location>
        <begin position="74"/>
        <end position="75"/>
    </location>
    <ligand>
        <name>substrate</name>
    </ligand>
</feature>
<feature type="binding site" evidence="1">
    <location>
        <begin position="184"/>
        <end position="185"/>
    </location>
    <ligand>
        <name>substrate</name>
    </ligand>
</feature>
<organism>
    <name type="scientific">Shewanella sp. (strain MR-7)</name>
    <dbReference type="NCBI Taxonomy" id="60481"/>
    <lineage>
        <taxon>Bacteria</taxon>
        <taxon>Pseudomonadati</taxon>
        <taxon>Pseudomonadota</taxon>
        <taxon>Gammaproteobacteria</taxon>
        <taxon>Alteromonadales</taxon>
        <taxon>Shewanellaceae</taxon>
        <taxon>Shewanella</taxon>
    </lineage>
</organism>
<gene>
    <name evidence="1" type="primary">murI</name>
    <name type="ordered locus">Shewmr7_0174</name>
</gene>
<keyword id="KW-0133">Cell shape</keyword>
<keyword id="KW-0961">Cell wall biogenesis/degradation</keyword>
<keyword id="KW-0413">Isomerase</keyword>
<keyword id="KW-0573">Peptidoglycan synthesis</keyword>
<dbReference type="EC" id="5.1.1.3" evidence="1"/>
<dbReference type="EMBL" id="CP000444">
    <property type="protein sequence ID" value="ABI41180.1"/>
    <property type="molecule type" value="Genomic_DNA"/>
</dbReference>
<dbReference type="SMR" id="Q0I0C5"/>
<dbReference type="KEGG" id="shm:Shewmr7_0174"/>
<dbReference type="HOGENOM" id="CLU_052344_2_0_6"/>
<dbReference type="UniPathway" id="UPA00219"/>
<dbReference type="GO" id="GO:0008881">
    <property type="term" value="F:glutamate racemase activity"/>
    <property type="evidence" value="ECO:0007669"/>
    <property type="project" value="UniProtKB-UniRule"/>
</dbReference>
<dbReference type="GO" id="GO:0071555">
    <property type="term" value="P:cell wall organization"/>
    <property type="evidence" value="ECO:0007669"/>
    <property type="project" value="UniProtKB-KW"/>
</dbReference>
<dbReference type="GO" id="GO:0009252">
    <property type="term" value="P:peptidoglycan biosynthetic process"/>
    <property type="evidence" value="ECO:0007669"/>
    <property type="project" value="UniProtKB-UniRule"/>
</dbReference>
<dbReference type="GO" id="GO:0008360">
    <property type="term" value="P:regulation of cell shape"/>
    <property type="evidence" value="ECO:0007669"/>
    <property type="project" value="UniProtKB-KW"/>
</dbReference>
<dbReference type="FunFam" id="3.40.50.1860:FF:000001">
    <property type="entry name" value="Glutamate racemase"/>
    <property type="match status" value="1"/>
</dbReference>
<dbReference type="Gene3D" id="3.40.50.1860">
    <property type="match status" value="2"/>
</dbReference>
<dbReference type="HAMAP" id="MF_00258">
    <property type="entry name" value="Glu_racemase"/>
    <property type="match status" value="1"/>
</dbReference>
<dbReference type="InterPro" id="IPR015942">
    <property type="entry name" value="Asp/Glu/hydantoin_racemase"/>
</dbReference>
<dbReference type="InterPro" id="IPR001920">
    <property type="entry name" value="Asp/Glu_race"/>
</dbReference>
<dbReference type="InterPro" id="IPR018187">
    <property type="entry name" value="Asp/Glu_racemase_AS_1"/>
</dbReference>
<dbReference type="InterPro" id="IPR033134">
    <property type="entry name" value="Asp/Glu_racemase_AS_2"/>
</dbReference>
<dbReference type="InterPro" id="IPR004391">
    <property type="entry name" value="Glu_race"/>
</dbReference>
<dbReference type="NCBIfam" id="TIGR00067">
    <property type="entry name" value="glut_race"/>
    <property type="match status" value="1"/>
</dbReference>
<dbReference type="PANTHER" id="PTHR21198">
    <property type="entry name" value="GLUTAMATE RACEMASE"/>
    <property type="match status" value="1"/>
</dbReference>
<dbReference type="PANTHER" id="PTHR21198:SF2">
    <property type="entry name" value="GLUTAMATE RACEMASE"/>
    <property type="match status" value="1"/>
</dbReference>
<dbReference type="Pfam" id="PF01177">
    <property type="entry name" value="Asp_Glu_race"/>
    <property type="match status" value="1"/>
</dbReference>
<dbReference type="SUPFAM" id="SSF53681">
    <property type="entry name" value="Aspartate/glutamate racemase"/>
    <property type="match status" value="2"/>
</dbReference>
<dbReference type="PROSITE" id="PS00923">
    <property type="entry name" value="ASP_GLU_RACEMASE_1"/>
    <property type="match status" value="1"/>
</dbReference>
<dbReference type="PROSITE" id="PS00924">
    <property type="entry name" value="ASP_GLU_RACEMASE_2"/>
    <property type="match status" value="1"/>
</dbReference>
<name>MURI_SHESR</name>
<accession>Q0I0C5</accession>
<sequence>MSQPILVFDSGIGGLSVLAEIRKLLPHHNYCYLFDNARLPYGELEEQELISGCVALIDQVVERTHAAIVVVACNTASTVVLPALRATLSIPVVGVVPAIKPAAQLSKSKRIGLLATPGTVKRHYTYELISQFADDCHVELFGSSELVLMAEQKIATGQLDMARLAQVLSPIVEADLDVLVLGCTHFPMLRDELQQVLGKGVTLLDSGEAIAKRVKTLLAETKSEQQVQEDANRDSVMQAFYTKAEISEGLASMLVDCGFSTLERITTINSNR</sequence>